<dbReference type="EC" id="1.11.1.9"/>
<dbReference type="EMBL" id="X69127">
    <property type="protein sequence ID" value="CAA48881.1"/>
    <property type="molecule type" value="Genomic_DNA"/>
</dbReference>
<dbReference type="PIR" id="S60593">
    <property type="entry name" value="S60593"/>
</dbReference>
<dbReference type="RefSeq" id="XP_001899550.1">
    <property type="nucleotide sequence ID" value="XM_001899515.2"/>
</dbReference>
<dbReference type="SMR" id="P67877"/>
<dbReference type="FunCoup" id="P67877">
    <property type="interactions" value="94"/>
</dbReference>
<dbReference type="STRING" id="6279.P67877"/>
<dbReference type="PeroxiBase" id="3749">
    <property type="entry name" value="BmalGPx01"/>
</dbReference>
<dbReference type="iPTMnet" id="P67877"/>
<dbReference type="EnsemblMetazoa" id="Bm2151a.1">
    <property type="protein sequence ID" value="Bm2151a.1"/>
    <property type="gene ID" value="WBGene00222412"/>
</dbReference>
<dbReference type="GeneID" id="6102977"/>
<dbReference type="KEGG" id="bmy:BM_BM2151"/>
<dbReference type="CTD" id="6102977"/>
<dbReference type="WormBase" id="Bm2151a">
    <property type="protein sequence ID" value="BM19667"/>
    <property type="gene ID" value="WBGene00222412"/>
</dbReference>
<dbReference type="HOGENOM" id="CLU_029507_2_1_1"/>
<dbReference type="InParanoid" id="P67877"/>
<dbReference type="OrthoDB" id="446890at2759"/>
<dbReference type="Proteomes" id="UP000006672">
    <property type="component" value="Unassembled WGS sequence"/>
</dbReference>
<dbReference type="GO" id="GO:0005576">
    <property type="term" value="C:extracellular region"/>
    <property type="evidence" value="ECO:0007669"/>
    <property type="project" value="UniProtKB-SubCell"/>
</dbReference>
<dbReference type="GO" id="GO:0004602">
    <property type="term" value="F:glutathione peroxidase activity"/>
    <property type="evidence" value="ECO:0007669"/>
    <property type="project" value="UniProtKB-EC"/>
</dbReference>
<dbReference type="GO" id="GO:0006979">
    <property type="term" value="P:response to oxidative stress"/>
    <property type="evidence" value="ECO:0007669"/>
    <property type="project" value="InterPro"/>
</dbReference>
<dbReference type="CDD" id="cd00340">
    <property type="entry name" value="GSH_Peroxidase"/>
    <property type="match status" value="1"/>
</dbReference>
<dbReference type="FunFam" id="3.40.30.10:FF:000283">
    <property type="entry name" value="Glutathione peroxidase"/>
    <property type="match status" value="1"/>
</dbReference>
<dbReference type="Gene3D" id="3.40.30.10">
    <property type="entry name" value="Glutaredoxin"/>
    <property type="match status" value="1"/>
</dbReference>
<dbReference type="InterPro" id="IPR000889">
    <property type="entry name" value="Glutathione_peroxidase"/>
</dbReference>
<dbReference type="InterPro" id="IPR029759">
    <property type="entry name" value="GPX_AS"/>
</dbReference>
<dbReference type="InterPro" id="IPR029760">
    <property type="entry name" value="GPX_CS"/>
</dbReference>
<dbReference type="InterPro" id="IPR036249">
    <property type="entry name" value="Thioredoxin-like_sf"/>
</dbReference>
<dbReference type="PANTHER" id="PTHR11592">
    <property type="entry name" value="GLUTATHIONE PEROXIDASE"/>
    <property type="match status" value="1"/>
</dbReference>
<dbReference type="PANTHER" id="PTHR11592:SF88">
    <property type="entry name" value="GLUTATHIONE PEROXIDASE-RELATED"/>
    <property type="match status" value="1"/>
</dbReference>
<dbReference type="Pfam" id="PF00255">
    <property type="entry name" value="GSHPx"/>
    <property type="match status" value="1"/>
</dbReference>
<dbReference type="PIRSF" id="PIRSF000303">
    <property type="entry name" value="Glutathion_perox"/>
    <property type="match status" value="1"/>
</dbReference>
<dbReference type="PRINTS" id="PR01011">
    <property type="entry name" value="GLUTPROXDASE"/>
</dbReference>
<dbReference type="SUPFAM" id="SSF52833">
    <property type="entry name" value="Thioredoxin-like"/>
    <property type="match status" value="1"/>
</dbReference>
<dbReference type="PROSITE" id="PS00460">
    <property type="entry name" value="GLUTATHIONE_PEROXID_1"/>
    <property type="match status" value="1"/>
</dbReference>
<dbReference type="PROSITE" id="PS00763">
    <property type="entry name" value="GLUTATHIONE_PEROXID_2"/>
    <property type="match status" value="1"/>
</dbReference>
<dbReference type="PROSITE" id="PS51355">
    <property type="entry name" value="GLUTATHIONE_PEROXID_3"/>
    <property type="match status" value="1"/>
</dbReference>
<proteinExistence type="evidence at protein level"/>
<name>GPXC_BRUMA</name>
<protein>
    <recommendedName>
        <fullName>Cuticular glutathione peroxidase</fullName>
        <ecNumber>1.11.1.9</ecNumber>
    </recommendedName>
    <alternativeName>
        <fullName>Cuticular glycoprotein gp29</fullName>
    </alternativeName>
    <alternativeName>
        <fullName>Major surface antigen gp29</fullName>
    </alternativeName>
    <alternativeName>
        <fullName>gp30</fullName>
    </alternativeName>
</protein>
<evidence type="ECO:0000250" key="1"/>
<evidence type="ECO:0000255" key="2"/>
<evidence type="ECO:0000269" key="3">
    <source>
    </source>
</evidence>
<evidence type="ECO:0000305" key="4"/>
<accession>P67877</accession>
<accession>P35665</accession>
<reference key="1">
    <citation type="journal article" date="1993" name="Mol. Biochem. Parasitol.">
        <title>Conservation of primary sequence of gp29, the major soluble cuticular glycoprotein, in three species of lymphatic filariae.</title>
        <authorList>
            <person name="Cookson E."/>
            <person name="Tang L."/>
            <person name="Selkirk M.E."/>
        </authorList>
    </citation>
    <scope>NUCLEOTIDE SEQUENCE [GENOMIC DNA]</scope>
</reference>
<reference key="2">
    <citation type="journal article" date="1993" name="Mol. Biochem. Parasitol.">
        <title>Molecular modelling and epitope prediction of gp29 from lymphatic filariae.</title>
        <authorList>
            <person name="Zvelebil M.J.J.M."/>
            <person name="Tang L."/>
            <person name="Cookson E."/>
            <person name="Selkirk M.E."/>
            <person name="Thornton J.M."/>
        </authorList>
    </citation>
    <scope>3D-STRUCTURE MODELING</scope>
    <scope>GLYCOSYLATION AT ASN-39 AND ASN-92</scope>
</reference>
<comment type="function">
    <text>Could inhibit the oxidative burst of leukocytes and neutralize the secondary products of lipid peroxidation, thus providing the resistance of these parasites to immune effector mechanisms and their persistence in the mammalian host. It may also be involved in the formation of cross-linking residues such as dityrosine, trityrosine and isotrityrosine identified in cuticular collagen. Highly cross-linked external cortex may also serve to protect the parasite from immune attack.</text>
</comment>
<comment type="catalytic activity">
    <reaction>
        <text>2 glutathione + H2O2 = glutathione disulfide + 2 H2O</text>
        <dbReference type="Rhea" id="RHEA:16833"/>
        <dbReference type="ChEBI" id="CHEBI:15377"/>
        <dbReference type="ChEBI" id="CHEBI:16240"/>
        <dbReference type="ChEBI" id="CHEBI:57925"/>
        <dbReference type="ChEBI" id="CHEBI:58297"/>
        <dbReference type="EC" id="1.11.1.9"/>
    </reaction>
</comment>
<comment type="subunit">
    <text>Homotetramer.</text>
</comment>
<comment type="subcellular location">
    <subcellularLocation>
        <location>Secreted</location>
    </subcellularLocation>
    <text>Secreted into the cuticle and ultimately released into the medium.</text>
</comment>
<comment type="developmental stage">
    <text>Up-regulated in the third stage larvae following infection of host. Concomitant synthesis occurs at a high level through the adult stage. Not detected in microfilariae.</text>
</comment>
<comment type="similarity">
    <text evidence="4">Belongs to the glutathione peroxidase family.</text>
</comment>
<sequence length="223" mass="25883">MSAQLLILSHMVLLQLIVAQLGPKIGKQFLKPKQCEITNQTVYDFQVQMLNGAQKSLAEYRNKVLLIVNVATYCAYTMQYRDFNPILESNSNGTLNILGFPCNQFYLQEPAENHELLSGLKYVRPGHGWEPHKNMHIFGKLEVNGENDHPLYKFLKERCPPTVPVIGKRHQLIYDPIGTNDVIWNFEKFLVDKKGRPRYRFHPENWVQGTAVKPYIDELEREI</sequence>
<organism>
    <name type="scientific">Brugia malayi</name>
    <name type="common">Filarial nematode worm</name>
    <dbReference type="NCBI Taxonomy" id="6279"/>
    <lineage>
        <taxon>Eukaryota</taxon>
        <taxon>Metazoa</taxon>
        <taxon>Ecdysozoa</taxon>
        <taxon>Nematoda</taxon>
        <taxon>Chromadorea</taxon>
        <taxon>Rhabditida</taxon>
        <taxon>Spirurina</taxon>
        <taxon>Spiruromorpha</taxon>
        <taxon>Filarioidea</taxon>
        <taxon>Onchocercidae</taxon>
        <taxon>Brugia</taxon>
    </lineage>
</organism>
<keyword id="KW-0325">Glycoprotein</keyword>
<keyword id="KW-0560">Oxidoreductase</keyword>
<keyword id="KW-0575">Peroxidase</keyword>
<keyword id="KW-1185">Reference proteome</keyword>
<keyword id="KW-0964">Secreted</keyword>
<keyword id="KW-0732">Signal</keyword>
<feature type="signal peptide" evidence="2">
    <location>
        <begin position="1"/>
        <end position="19"/>
    </location>
</feature>
<feature type="chain" id="PRO_0000013091" description="Cuticular glutathione peroxidase">
    <location>
        <begin position="20"/>
        <end position="223"/>
    </location>
</feature>
<feature type="active site" evidence="1">
    <location>
        <position position="74"/>
    </location>
</feature>
<feature type="glycosylation site" description="N-linked (GlcNAc...) asparagine" evidence="3">
    <location>
        <position position="39"/>
    </location>
</feature>
<feature type="glycosylation site" description="N-linked (GlcNAc...) asparagine" evidence="3">
    <location>
        <position position="92"/>
    </location>
</feature>